<organism>
    <name type="scientific">Listeria monocytogenes serotype 4b (strain F2365)</name>
    <dbReference type="NCBI Taxonomy" id="265669"/>
    <lineage>
        <taxon>Bacteria</taxon>
        <taxon>Bacillati</taxon>
        <taxon>Bacillota</taxon>
        <taxon>Bacilli</taxon>
        <taxon>Bacillales</taxon>
        <taxon>Listeriaceae</taxon>
        <taxon>Listeria</taxon>
    </lineage>
</organism>
<evidence type="ECO:0000255" key="1">
    <source>
        <dbReference type="HAMAP-Rule" id="MF_02102"/>
    </source>
</evidence>
<comment type="function">
    <text evidence="1">Catalyzes the phosphorolysis of N-carbamoylputrescine to form carbamoyl phosphate and putrescine. Is involved in the degradation pathway of the polyamine agmatine.</text>
</comment>
<comment type="catalytic activity">
    <reaction evidence="1">
        <text>carbamoyl phosphate + putrescine = N-carbamoylputrescine + phosphate + H(+)</text>
        <dbReference type="Rhea" id="RHEA:21936"/>
        <dbReference type="ChEBI" id="CHEBI:15378"/>
        <dbReference type="ChEBI" id="CHEBI:43474"/>
        <dbReference type="ChEBI" id="CHEBI:58228"/>
        <dbReference type="ChEBI" id="CHEBI:58318"/>
        <dbReference type="ChEBI" id="CHEBI:326268"/>
        <dbReference type="EC" id="2.1.3.6"/>
    </reaction>
</comment>
<comment type="pathway">
    <text evidence="1">Amine and polyamine biosynthesis; putrescine biosynthesis via agmatine pathway; putrescine from N-carbamoylputrescine (transferase route): step 1/1.</text>
</comment>
<comment type="subunit">
    <text evidence="1">Homotrimer.</text>
</comment>
<comment type="subcellular location">
    <subcellularLocation>
        <location evidence="1">Cytoplasm</location>
    </subcellularLocation>
</comment>
<comment type="similarity">
    <text evidence="1">Belongs to the aspartate/ornithine carbamoyltransferase superfamily. PTCase family.</text>
</comment>
<protein>
    <recommendedName>
        <fullName evidence="1">Putrescine carbamoyltransferase</fullName>
        <shortName evidence="1">PTC</shortName>
        <shortName evidence="1">PTCase</shortName>
        <ecNumber evidence="1">2.1.3.6</ecNumber>
    </recommendedName>
    <alternativeName>
        <fullName evidence="1">Putrescine transcarbamoylase</fullName>
    </alternativeName>
    <alternativeName>
        <fullName evidence="1">Putrescine transcarbamylase</fullName>
    </alternativeName>
</protein>
<keyword id="KW-0963">Cytoplasm</keyword>
<keyword id="KW-0620">Polyamine biosynthesis</keyword>
<keyword id="KW-0808">Transferase</keyword>
<dbReference type="EC" id="2.1.3.6" evidence="1"/>
<dbReference type="EMBL" id="AE017262">
    <property type="protein sequence ID" value="AAT02833.1"/>
    <property type="molecule type" value="Genomic_DNA"/>
</dbReference>
<dbReference type="RefSeq" id="WP_003724872.1">
    <property type="nucleotide sequence ID" value="NC_002973.6"/>
</dbReference>
<dbReference type="SMR" id="Q725C8"/>
<dbReference type="KEGG" id="lmf:LMOf2365_0045"/>
<dbReference type="HOGENOM" id="CLU_043846_3_1_9"/>
<dbReference type="UniPathway" id="UPA00534">
    <property type="reaction ID" value="UER00941"/>
</dbReference>
<dbReference type="PHI-base" id="PHI:9501"/>
<dbReference type="GO" id="GO:0005737">
    <property type="term" value="C:cytoplasm"/>
    <property type="evidence" value="ECO:0007669"/>
    <property type="project" value="UniProtKB-SubCell"/>
</dbReference>
<dbReference type="GO" id="GO:0016597">
    <property type="term" value="F:amino acid binding"/>
    <property type="evidence" value="ECO:0007669"/>
    <property type="project" value="InterPro"/>
</dbReference>
<dbReference type="GO" id="GO:0004585">
    <property type="term" value="F:ornithine carbamoyltransferase activity"/>
    <property type="evidence" value="ECO:0007669"/>
    <property type="project" value="TreeGrafter"/>
</dbReference>
<dbReference type="GO" id="GO:0050231">
    <property type="term" value="F:putrescine carbamoyltransferase activity"/>
    <property type="evidence" value="ECO:0007669"/>
    <property type="project" value="UniProtKB-UniRule"/>
</dbReference>
<dbReference type="GO" id="GO:0042450">
    <property type="term" value="P:arginine biosynthetic process via ornithine"/>
    <property type="evidence" value="ECO:0007669"/>
    <property type="project" value="TreeGrafter"/>
</dbReference>
<dbReference type="GO" id="GO:0019240">
    <property type="term" value="P:citrulline biosynthetic process"/>
    <property type="evidence" value="ECO:0007669"/>
    <property type="project" value="TreeGrafter"/>
</dbReference>
<dbReference type="GO" id="GO:0033390">
    <property type="term" value="P:putrescine biosynthetic process from arginine via N-carbamoylputrescine"/>
    <property type="evidence" value="ECO:0007669"/>
    <property type="project" value="UniProtKB-UniRule"/>
</dbReference>
<dbReference type="FunFam" id="3.40.50.1370:FF:000008">
    <property type="entry name" value="Ornithine carbamoyltransferase"/>
    <property type="match status" value="1"/>
</dbReference>
<dbReference type="Gene3D" id="3.40.50.1370">
    <property type="entry name" value="Aspartate/ornithine carbamoyltransferase"/>
    <property type="match status" value="2"/>
</dbReference>
<dbReference type="HAMAP" id="MF_02102">
    <property type="entry name" value="PTCase"/>
    <property type="match status" value="1"/>
</dbReference>
<dbReference type="InterPro" id="IPR006132">
    <property type="entry name" value="Asp/Orn_carbamoyltranf_P-bd"/>
</dbReference>
<dbReference type="InterPro" id="IPR006130">
    <property type="entry name" value="Asp/Orn_carbamoylTrfase"/>
</dbReference>
<dbReference type="InterPro" id="IPR036901">
    <property type="entry name" value="Asp/Orn_carbamoylTrfase_sf"/>
</dbReference>
<dbReference type="InterPro" id="IPR006131">
    <property type="entry name" value="Asp_carbamoyltransf_Asp/Orn-bd"/>
</dbReference>
<dbReference type="InterPro" id="IPR002292">
    <property type="entry name" value="Orn/put_carbamltrans"/>
</dbReference>
<dbReference type="InterPro" id="IPR024903">
    <property type="entry name" value="PtcA"/>
</dbReference>
<dbReference type="NCBIfam" id="TIGR00658">
    <property type="entry name" value="orni_carb_tr"/>
    <property type="match status" value="1"/>
</dbReference>
<dbReference type="NCBIfam" id="NF001986">
    <property type="entry name" value="PRK00779.1"/>
    <property type="match status" value="1"/>
</dbReference>
<dbReference type="NCBIfam" id="TIGR04384">
    <property type="entry name" value="putr_carbamoyl"/>
    <property type="match status" value="1"/>
</dbReference>
<dbReference type="PANTHER" id="PTHR45753">
    <property type="entry name" value="ORNITHINE CARBAMOYLTRANSFERASE, MITOCHONDRIAL"/>
    <property type="match status" value="1"/>
</dbReference>
<dbReference type="PANTHER" id="PTHR45753:SF3">
    <property type="entry name" value="ORNITHINE TRANSCARBAMYLASE, MITOCHONDRIAL"/>
    <property type="match status" value="1"/>
</dbReference>
<dbReference type="Pfam" id="PF00185">
    <property type="entry name" value="OTCace"/>
    <property type="match status" value="1"/>
</dbReference>
<dbReference type="Pfam" id="PF02729">
    <property type="entry name" value="OTCace_N"/>
    <property type="match status" value="1"/>
</dbReference>
<dbReference type="PRINTS" id="PR00100">
    <property type="entry name" value="AOTCASE"/>
</dbReference>
<dbReference type="PRINTS" id="PR00102">
    <property type="entry name" value="OTCASE"/>
</dbReference>
<dbReference type="SUPFAM" id="SSF53671">
    <property type="entry name" value="Aspartate/ornithine carbamoyltransferase"/>
    <property type="match status" value="1"/>
</dbReference>
<proteinExistence type="inferred from homology"/>
<feature type="chain" id="PRO_0000112944" description="Putrescine carbamoyltransferase">
    <location>
        <begin position="1"/>
        <end position="341"/>
    </location>
</feature>
<feature type="binding site" evidence="1">
    <location>
        <begin position="54"/>
        <end position="58"/>
    </location>
    <ligand>
        <name>carbamoyl phosphate</name>
        <dbReference type="ChEBI" id="CHEBI:58228"/>
    </ligand>
</feature>
<feature type="binding site" evidence="1">
    <location>
        <position position="105"/>
    </location>
    <ligand>
        <name>carbamoyl phosphate</name>
        <dbReference type="ChEBI" id="CHEBI:58228"/>
    </ligand>
</feature>
<feature type="binding site" evidence="1">
    <location>
        <position position="132"/>
    </location>
    <ligand>
        <name>carbamoyl phosphate</name>
        <dbReference type="ChEBI" id="CHEBI:58228"/>
    </ligand>
</feature>
<feature type="binding site" evidence="1">
    <location>
        <begin position="271"/>
        <end position="274"/>
    </location>
    <ligand>
        <name>putrescine</name>
        <dbReference type="ChEBI" id="CHEBI:326268"/>
    </ligand>
</feature>
<feature type="site" description="Important for structural integrity" evidence="1">
    <location>
        <position position="29"/>
    </location>
</feature>
<feature type="site" description="Important for structural integrity" evidence="1">
    <location>
        <position position="145"/>
    </location>
</feature>
<name>PTC_LISMF</name>
<sequence length="341" mass="38469">MNKKRDFIDTKDFSKEEILFMIEIGRKMKESIKNGHYPQLLKHKTLGMIFEQSSTRTRVSFETAMTQLGGHAQYLAPGQIQLGGHESVGDTAKVLSRLVDILMARVERHQTVVELANTAAIPVINGMSDYNHPTQELGDAITMFEHLPKGKKIEDCKIVFVGDATQVCASTMFMATKLGMDFVQFGPKGFQLREEHLKIAEENCKVSGGSYLITEDVDIALKDADFIYTDVWYGLYEAELSEEERMKTFYPKYQVNKELISKAAPHVKFMHCLPATRGEEVTDEVLDAPYSVVIDEAENRLTAMRALLVYFMNPYVREAGFAVAEKYDAELELLLRNGAGL</sequence>
<reference key="1">
    <citation type="journal article" date="2004" name="Nucleic Acids Res.">
        <title>Whole genome comparisons of serotype 4b and 1/2a strains of the food-borne pathogen Listeria monocytogenes reveal new insights into the core genome components of this species.</title>
        <authorList>
            <person name="Nelson K.E."/>
            <person name="Fouts D.E."/>
            <person name="Mongodin E.F."/>
            <person name="Ravel J."/>
            <person name="DeBoy R.T."/>
            <person name="Kolonay J.F."/>
            <person name="Rasko D.A."/>
            <person name="Angiuoli S.V."/>
            <person name="Gill S.R."/>
            <person name="Paulsen I.T."/>
            <person name="Peterson J.D."/>
            <person name="White O."/>
            <person name="Nelson W.C."/>
            <person name="Nierman W.C."/>
            <person name="Beanan M.J."/>
            <person name="Brinkac L.M."/>
            <person name="Daugherty S.C."/>
            <person name="Dodson R.J."/>
            <person name="Durkin A.S."/>
            <person name="Madupu R."/>
            <person name="Haft D.H."/>
            <person name="Selengut J."/>
            <person name="Van Aken S.E."/>
            <person name="Khouri H.M."/>
            <person name="Fedorova N."/>
            <person name="Forberger H.A."/>
            <person name="Tran B."/>
            <person name="Kathariou S."/>
            <person name="Wonderling L.D."/>
            <person name="Uhlich G.A."/>
            <person name="Bayles D.O."/>
            <person name="Luchansky J.B."/>
            <person name="Fraser C.M."/>
        </authorList>
    </citation>
    <scope>NUCLEOTIDE SEQUENCE [LARGE SCALE GENOMIC DNA]</scope>
    <source>
        <strain>F2365</strain>
    </source>
</reference>
<accession>Q725C8</accession>
<gene>
    <name evidence="1" type="primary">ptcA</name>
    <name type="synonym">argF-1</name>
    <name type="ordered locus">LMOf2365_0045</name>
</gene>